<evidence type="ECO:0000255" key="1">
    <source>
        <dbReference type="HAMAP-Rule" id="MF_00575"/>
    </source>
</evidence>
<organism>
    <name type="scientific">Xylella fastidiosa (strain M12)</name>
    <dbReference type="NCBI Taxonomy" id="405440"/>
    <lineage>
        <taxon>Bacteria</taxon>
        <taxon>Pseudomonadati</taxon>
        <taxon>Pseudomonadota</taxon>
        <taxon>Gammaproteobacteria</taxon>
        <taxon>Lysobacterales</taxon>
        <taxon>Lysobacteraceae</taxon>
        <taxon>Xylella</taxon>
    </lineage>
</organism>
<accession>B0U5J4</accession>
<feature type="chain" id="PRO_1000129546" description="UDP-2,3-diacylglucosamine hydrolase">
    <location>
        <begin position="1"/>
        <end position="250"/>
    </location>
</feature>
<feature type="binding site" evidence="1">
    <location>
        <position position="8"/>
    </location>
    <ligand>
        <name>Mn(2+)</name>
        <dbReference type="ChEBI" id="CHEBI:29035"/>
        <label>1</label>
    </ligand>
</feature>
<feature type="binding site" evidence="1">
    <location>
        <position position="10"/>
    </location>
    <ligand>
        <name>Mn(2+)</name>
        <dbReference type="ChEBI" id="CHEBI:29035"/>
        <label>1</label>
    </ligand>
</feature>
<feature type="binding site" evidence="1">
    <location>
        <position position="41"/>
    </location>
    <ligand>
        <name>Mn(2+)</name>
        <dbReference type="ChEBI" id="CHEBI:29035"/>
        <label>1</label>
    </ligand>
</feature>
<feature type="binding site" evidence="1">
    <location>
        <position position="41"/>
    </location>
    <ligand>
        <name>Mn(2+)</name>
        <dbReference type="ChEBI" id="CHEBI:29035"/>
        <label>2</label>
    </ligand>
</feature>
<feature type="binding site" evidence="1">
    <location>
        <begin position="79"/>
        <end position="80"/>
    </location>
    <ligand>
        <name>substrate</name>
    </ligand>
</feature>
<feature type="binding site" evidence="1">
    <location>
        <position position="79"/>
    </location>
    <ligand>
        <name>Mn(2+)</name>
        <dbReference type="ChEBI" id="CHEBI:29035"/>
        <label>2</label>
    </ligand>
</feature>
<feature type="binding site" evidence="1">
    <location>
        <position position="114"/>
    </location>
    <ligand>
        <name>Mn(2+)</name>
        <dbReference type="ChEBI" id="CHEBI:29035"/>
        <label>2</label>
    </ligand>
</feature>
<feature type="binding site" evidence="1">
    <location>
        <position position="122"/>
    </location>
    <ligand>
        <name>substrate</name>
    </ligand>
</feature>
<feature type="binding site" evidence="1">
    <location>
        <position position="160"/>
    </location>
    <ligand>
        <name>substrate</name>
    </ligand>
</feature>
<feature type="binding site" evidence="1">
    <location>
        <position position="172"/>
    </location>
    <ligand>
        <name>substrate</name>
    </ligand>
</feature>
<feature type="binding site" evidence="1">
    <location>
        <position position="175"/>
    </location>
    <ligand>
        <name>substrate</name>
    </ligand>
</feature>
<feature type="binding site" evidence="1">
    <location>
        <position position="203"/>
    </location>
    <ligand>
        <name>Mn(2+)</name>
        <dbReference type="ChEBI" id="CHEBI:29035"/>
        <label>2</label>
    </ligand>
</feature>
<feature type="binding site" evidence="1">
    <location>
        <position position="203"/>
    </location>
    <ligand>
        <name>substrate</name>
    </ligand>
</feature>
<feature type="binding site" evidence="1">
    <location>
        <position position="205"/>
    </location>
    <ligand>
        <name>Mn(2+)</name>
        <dbReference type="ChEBI" id="CHEBI:29035"/>
        <label>1</label>
    </ligand>
</feature>
<dbReference type="EC" id="3.6.1.54" evidence="1"/>
<dbReference type="EMBL" id="CP000941">
    <property type="protein sequence ID" value="ACA13012.1"/>
    <property type="molecule type" value="Genomic_DNA"/>
</dbReference>
<dbReference type="RefSeq" id="WP_012338111.1">
    <property type="nucleotide sequence ID" value="NC_010513.1"/>
</dbReference>
<dbReference type="SMR" id="B0U5J4"/>
<dbReference type="KEGG" id="xfm:Xfasm12_2158"/>
<dbReference type="HOGENOM" id="CLU_074586_0_0_6"/>
<dbReference type="UniPathway" id="UPA00359">
    <property type="reaction ID" value="UER00480"/>
</dbReference>
<dbReference type="GO" id="GO:0005737">
    <property type="term" value="C:cytoplasm"/>
    <property type="evidence" value="ECO:0007669"/>
    <property type="project" value="InterPro"/>
</dbReference>
<dbReference type="GO" id="GO:0019897">
    <property type="term" value="C:extrinsic component of plasma membrane"/>
    <property type="evidence" value="ECO:0007669"/>
    <property type="project" value="UniProtKB-UniRule"/>
</dbReference>
<dbReference type="GO" id="GO:0030145">
    <property type="term" value="F:manganese ion binding"/>
    <property type="evidence" value="ECO:0007669"/>
    <property type="project" value="UniProtKB-UniRule"/>
</dbReference>
<dbReference type="GO" id="GO:0008758">
    <property type="term" value="F:UDP-2,3-diacylglucosamine hydrolase activity"/>
    <property type="evidence" value="ECO:0007669"/>
    <property type="project" value="UniProtKB-UniRule"/>
</dbReference>
<dbReference type="GO" id="GO:0009245">
    <property type="term" value="P:lipid A biosynthetic process"/>
    <property type="evidence" value="ECO:0007669"/>
    <property type="project" value="UniProtKB-UniRule"/>
</dbReference>
<dbReference type="CDD" id="cd07398">
    <property type="entry name" value="MPP_YbbF-LpxH"/>
    <property type="match status" value="1"/>
</dbReference>
<dbReference type="Gene3D" id="3.60.21.10">
    <property type="match status" value="1"/>
</dbReference>
<dbReference type="HAMAP" id="MF_00575">
    <property type="entry name" value="LpxH"/>
    <property type="match status" value="1"/>
</dbReference>
<dbReference type="InterPro" id="IPR004843">
    <property type="entry name" value="Calcineurin-like_PHP_ApaH"/>
</dbReference>
<dbReference type="InterPro" id="IPR043461">
    <property type="entry name" value="LpxH-like"/>
</dbReference>
<dbReference type="InterPro" id="IPR029052">
    <property type="entry name" value="Metallo-depent_PP-like"/>
</dbReference>
<dbReference type="InterPro" id="IPR010138">
    <property type="entry name" value="UDP-diacylglucosamine_Hdrlase"/>
</dbReference>
<dbReference type="NCBIfam" id="TIGR01854">
    <property type="entry name" value="lipid_A_lpxH"/>
    <property type="match status" value="1"/>
</dbReference>
<dbReference type="NCBIfam" id="NF003743">
    <property type="entry name" value="PRK05340.1"/>
    <property type="match status" value="1"/>
</dbReference>
<dbReference type="PANTHER" id="PTHR34990:SF1">
    <property type="entry name" value="UDP-2,3-DIACYLGLUCOSAMINE HYDROLASE"/>
    <property type="match status" value="1"/>
</dbReference>
<dbReference type="PANTHER" id="PTHR34990">
    <property type="entry name" value="UDP-2,3-DIACYLGLUCOSAMINE HYDROLASE-RELATED"/>
    <property type="match status" value="1"/>
</dbReference>
<dbReference type="Pfam" id="PF00149">
    <property type="entry name" value="Metallophos"/>
    <property type="match status" value="1"/>
</dbReference>
<dbReference type="SUPFAM" id="SSF56300">
    <property type="entry name" value="Metallo-dependent phosphatases"/>
    <property type="match status" value="1"/>
</dbReference>
<protein>
    <recommendedName>
        <fullName evidence="1">UDP-2,3-diacylglucosamine hydrolase</fullName>
        <ecNumber evidence="1">3.6.1.54</ecNumber>
    </recommendedName>
    <alternativeName>
        <fullName evidence="1">UDP-2,3-diacylglucosamine diphosphatase</fullName>
    </alternativeName>
</protein>
<comment type="function">
    <text evidence="1">Hydrolyzes the pyrophosphate bond of UDP-2,3-diacylglucosamine to yield 2,3-diacylglucosamine 1-phosphate (lipid X) and UMP by catalyzing the attack of water at the alpha-P atom. Involved in the biosynthesis of lipid A, a phosphorylated glycolipid that anchors the lipopolysaccharide to the outer membrane of the cell.</text>
</comment>
<comment type="catalytic activity">
    <reaction evidence="1">
        <text>UDP-2-N,3-O-bis[(3R)-3-hydroxytetradecanoyl]-alpha-D-glucosamine + H2O = 2-N,3-O-bis[(3R)-3-hydroxytetradecanoyl]-alpha-D-glucosaminyl 1-phosphate + UMP + 2 H(+)</text>
        <dbReference type="Rhea" id="RHEA:25213"/>
        <dbReference type="ChEBI" id="CHEBI:15377"/>
        <dbReference type="ChEBI" id="CHEBI:15378"/>
        <dbReference type="ChEBI" id="CHEBI:57865"/>
        <dbReference type="ChEBI" id="CHEBI:57957"/>
        <dbReference type="ChEBI" id="CHEBI:78847"/>
        <dbReference type="EC" id="3.6.1.54"/>
    </reaction>
</comment>
<comment type="cofactor">
    <cofactor evidence="1">
        <name>Mn(2+)</name>
        <dbReference type="ChEBI" id="CHEBI:29035"/>
    </cofactor>
    <text evidence="1">Binds 2 Mn(2+) ions per subunit in a binuclear metal center.</text>
</comment>
<comment type="pathway">
    <text evidence="1">Glycolipid biosynthesis; lipid IV(A) biosynthesis; lipid IV(A) from (3R)-3-hydroxytetradecanoyl-[acyl-carrier-protein] and UDP-N-acetyl-alpha-D-glucosamine: step 4/6.</text>
</comment>
<comment type="subcellular location">
    <subcellularLocation>
        <location evidence="1">Cell inner membrane</location>
        <topology evidence="1">Peripheral membrane protein</topology>
        <orientation evidence="1">Cytoplasmic side</orientation>
    </subcellularLocation>
</comment>
<comment type="similarity">
    <text evidence="1">Belongs to the LpxH family.</text>
</comment>
<sequence>MTTLIISDLHLDPLRPVVTELFLRFLREQVSGADALYILGDLFEVWIGDDMPSEVADMVAAALRTYADAGTPLYFMPGNRDFLVGADYAARAGFRILPDPCVVDLYGEPTLLLHGDLLCTDDIAYQAFRAQTRDPEFIAQFLTQTLSARLAFSQQARLASHAHQSGLKQENDSTQFEKITDVVPADVAAMFACYGVNRMIHGHTHRPALHMLQVAECACTRVVLGDWYQQGSVLCVDADGLVLEQLLLPG</sequence>
<reference key="1">
    <citation type="journal article" date="2010" name="J. Bacteriol.">
        <title>Whole genome sequences of two Xylella fastidiosa strains (M12 and M23) causing almond leaf scorch disease in California.</title>
        <authorList>
            <person name="Chen J."/>
            <person name="Xie G."/>
            <person name="Han S."/>
            <person name="Chertkov O."/>
            <person name="Sims D."/>
            <person name="Civerolo E.L."/>
        </authorList>
    </citation>
    <scope>NUCLEOTIDE SEQUENCE [LARGE SCALE GENOMIC DNA]</scope>
    <source>
        <strain>M12</strain>
    </source>
</reference>
<keyword id="KW-0997">Cell inner membrane</keyword>
<keyword id="KW-1003">Cell membrane</keyword>
<keyword id="KW-0378">Hydrolase</keyword>
<keyword id="KW-0441">Lipid A biosynthesis</keyword>
<keyword id="KW-0444">Lipid biosynthesis</keyword>
<keyword id="KW-0443">Lipid metabolism</keyword>
<keyword id="KW-0464">Manganese</keyword>
<keyword id="KW-0472">Membrane</keyword>
<keyword id="KW-0479">Metal-binding</keyword>
<gene>
    <name evidence="1" type="primary">lpxH</name>
    <name type="ordered locus">Xfasm12_2158</name>
</gene>
<name>LPXH_XYLFM</name>
<proteinExistence type="inferred from homology"/>